<reference key="1">
    <citation type="submission" date="2007-02" db="EMBL/GenBank/DDBJ databases">
        <title>Complete sequence of chromosome 1 of Rhodobacter sphaeroides ATCC 17029.</title>
        <authorList>
            <person name="Copeland A."/>
            <person name="Lucas S."/>
            <person name="Lapidus A."/>
            <person name="Barry K."/>
            <person name="Detter J.C."/>
            <person name="Glavina del Rio T."/>
            <person name="Hammon N."/>
            <person name="Israni S."/>
            <person name="Dalin E."/>
            <person name="Tice H."/>
            <person name="Pitluck S."/>
            <person name="Kiss H."/>
            <person name="Brettin T."/>
            <person name="Bruce D."/>
            <person name="Han C."/>
            <person name="Tapia R."/>
            <person name="Gilna P."/>
            <person name="Schmutz J."/>
            <person name="Larimer F."/>
            <person name="Land M."/>
            <person name="Hauser L."/>
            <person name="Kyrpides N."/>
            <person name="Mikhailova N."/>
            <person name="Richardson P."/>
            <person name="Mackenzie C."/>
            <person name="Choudhary M."/>
            <person name="Donohue T.J."/>
            <person name="Kaplan S."/>
        </authorList>
    </citation>
    <scope>NUCLEOTIDE SEQUENCE [LARGE SCALE GENOMIC DNA]</scope>
    <source>
        <strain>ATCC 17029 / ATH 2.4.9</strain>
    </source>
</reference>
<organism>
    <name type="scientific">Cereibacter sphaeroides (strain ATCC 17029 / ATH 2.4.9)</name>
    <name type="common">Rhodobacter sphaeroides</name>
    <dbReference type="NCBI Taxonomy" id="349101"/>
    <lineage>
        <taxon>Bacteria</taxon>
        <taxon>Pseudomonadati</taxon>
        <taxon>Pseudomonadota</taxon>
        <taxon>Alphaproteobacteria</taxon>
        <taxon>Rhodobacterales</taxon>
        <taxon>Paracoccaceae</taxon>
        <taxon>Cereibacter</taxon>
    </lineage>
</organism>
<protein>
    <recommendedName>
        <fullName evidence="1">DNA-directed RNA polymerase subunit omega</fullName>
        <shortName evidence="1">RNAP omega subunit</shortName>
        <ecNumber evidence="1">2.7.7.6</ecNumber>
    </recommendedName>
    <alternativeName>
        <fullName evidence="1">RNA polymerase omega subunit</fullName>
    </alternativeName>
    <alternativeName>
        <fullName evidence="1">Transcriptase subunit omega</fullName>
    </alternativeName>
</protein>
<accession>A3PGF2</accession>
<dbReference type="EC" id="2.7.7.6" evidence="1"/>
<dbReference type="EMBL" id="CP000577">
    <property type="protein sequence ID" value="ABN75418.1"/>
    <property type="molecule type" value="Genomic_DNA"/>
</dbReference>
<dbReference type="RefSeq" id="WP_002722412.1">
    <property type="nucleotide sequence ID" value="NC_009049.1"/>
</dbReference>
<dbReference type="SMR" id="A3PGF2"/>
<dbReference type="GeneID" id="67448429"/>
<dbReference type="KEGG" id="rsh:Rsph17029_0302"/>
<dbReference type="HOGENOM" id="CLU_125406_2_0_5"/>
<dbReference type="GO" id="GO:0000428">
    <property type="term" value="C:DNA-directed RNA polymerase complex"/>
    <property type="evidence" value="ECO:0007669"/>
    <property type="project" value="UniProtKB-KW"/>
</dbReference>
<dbReference type="GO" id="GO:0003677">
    <property type="term" value="F:DNA binding"/>
    <property type="evidence" value="ECO:0007669"/>
    <property type="project" value="UniProtKB-UniRule"/>
</dbReference>
<dbReference type="GO" id="GO:0003899">
    <property type="term" value="F:DNA-directed RNA polymerase activity"/>
    <property type="evidence" value="ECO:0007669"/>
    <property type="project" value="UniProtKB-UniRule"/>
</dbReference>
<dbReference type="GO" id="GO:0006351">
    <property type="term" value="P:DNA-templated transcription"/>
    <property type="evidence" value="ECO:0007669"/>
    <property type="project" value="UniProtKB-UniRule"/>
</dbReference>
<dbReference type="Gene3D" id="3.90.940.10">
    <property type="match status" value="1"/>
</dbReference>
<dbReference type="HAMAP" id="MF_00366">
    <property type="entry name" value="RNApol_bact_RpoZ"/>
    <property type="match status" value="1"/>
</dbReference>
<dbReference type="InterPro" id="IPR003716">
    <property type="entry name" value="DNA-dir_RNA_pol_omega"/>
</dbReference>
<dbReference type="InterPro" id="IPR006110">
    <property type="entry name" value="Pol_omega/Rpo6/RPB6"/>
</dbReference>
<dbReference type="InterPro" id="IPR036161">
    <property type="entry name" value="RPB6/omega-like_sf"/>
</dbReference>
<dbReference type="NCBIfam" id="TIGR00690">
    <property type="entry name" value="rpoZ"/>
    <property type="match status" value="1"/>
</dbReference>
<dbReference type="PANTHER" id="PTHR34476">
    <property type="entry name" value="DNA-DIRECTED RNA POLYMERASE SUBUNIT OMEGA"/>
    <property type="match status" value="1"/>
</dbReference>
<dbReference type="PANTHER" id="PTHR34476:SF1">
    <property type="entry name" value="DNA-DIRECTED RNA POLYMERASE SUBUNIT OMEGA"/>
    <property type="match status" value="1"/>
</dbReference>
<dbReference type="Pfam" id="PF01192">
    <property type="entry name" value="RNA_pol_Rpb6"/>
    <property type="match status" value="1"/>
</dbReference>
<dbReference type="SMART" id="SM01409">
    <property type="entry name" value="RNA_pol_Rpb6"/>
    <property type="match status" value="1"/>
</dbReference>
<dbReference type="SUPFAM" id="SSF63562">
    <property type="entry name" value="RPB6/omega subunit-like"/>
    <property type="match status" value="1"/>
</dbReference>
<comment type="function">
    <text evidence="1">Promotes RNA polymerase assembly. Latches the N- and C-terminal regions of the beta' subunit thereby facilitating its interaction with the beta and alpha subunits.</text>
</comment>
<comment type="catalytic activity">
    <reaction evidence="1">
        <text>RNA(n) + a ribonucleoside 5'-triphosphate = RNA(n+1) + diphosphate</text>
        <dbReference type="Rhea" id="RHEA:21248"/>
        <dbReference type="Rhea" id="RHEA-COMP:14527"/>
        <dbReference type="Rhea" id="RHEA-COMP:17342"/>
        <dbReference type="ChEBI" id="CHEBI:33019"/>
        <dbReference type="ChEBI" id="CHEBI:61557"/>
        <dbReference type="ChEBI" id="CHEBI:140395"/>
        <dbReference type="EC" id="2.7.7.6"/>
    </reaction>
</comment>
<comment type="subunit">
    <text evidence="1">The RNAP catalytic core consists of 2 alpha, 1 beta, 1 beta' and 1 omega subunit. When a sigma factor is associated with the core the holoenzyme is formed, which can initiate transcription.</text>
</comment>
<comment type="similarity">
    <text evidence="1">Belongs to the RNA polymerase subunit omega family.</text>
</comment>
<proteinExistence type="inferred from homology"/>
<name>RPOZ_CERS1</name>
<feature type="chain" id="PRO_1000005994" description="DNA-directed RNA polymerase subunit omega">
    <location>
        <begin position="1"/>
        <end position="117"/>
    </location>
</feature>
<sequence length="117" mass="13238">MARVTVEDCVDKVPNRFELVMLAAHRAREIASGSSLTIDRDNDKNPVVALREIAEETQSAESLRERMIESHQTQIEVDEPEEDQMALLMGSEVDRPVQDDMSEEKLLRALMEAQGQN</sequence>
<keyword id="KW-0240">DNA-directed RNA polymerase</keyword>
<keyword id="KW-0548">Nucleotidyltransferase</keyword>
<keyword id="KW-0804">Transcription</keyword>
<keyword id="KW-0808">Transferase</keyword>
<gene>
    <name evidence="1" type="primary">rpoZ</name>
    <name type="ordered locus">Rsph17029_0302</name>
</gene>
<evidence type="ECO:0000255" key="1">
    <source>
        <dbReference type="HAMAP-Rule" id="MF_00366"/>
    </source>
</evidence>